<organismHost>
    <name type="scientific">Aves</name>
    <dbReference type="NCBI Taxonomy" id="8782"/>
</organismHost>
<organismHost>
    <name type="scientific">Homo sapiens</name>
    <name type="common">Human</name>
    <dbReference type="NCBI Taxonomy" id="9606"/>
</organismHost>
<organismHost>
    <name type="scientific">Sus scrofa</name>
    <name type="common">Pig</name>
    <dbReference type="NCBI Taxonomy" id="9823"/>
</organismHost>
<keyword id="KW-1132">Decay of host mRNAs by virus</keyword>
<keyword id="KW-1262">Eukaryotic host gene expression shutoff by virus</keyword>
<keyword id="KW-1190">Host gene expression shutoff by virus</keyword>
<keyword id="KW-1192">Host mRNA suppression by virus</keyword>
<keyword id="KW-0945">Host-virus interaction</keyword>
<keyword id="KW-0688">Ribosomal frameshifting</keyword>
<name>PAX_I18A0</name>
<gene>
    <name type="primary">PA</name>
</gene>
<evidence type="ECO:0000250" key="1">
    <source>
        <dbReference type="UniProtKB" id="P0CK64"/>
    </source>
</evidence>
<evidence type="ECO:0000250" key="2">
    <source>
        <dbReference type="UniProtKB" id="P0DJW8"/>
    </source>
</evidence>
<evidence type="ECO:0000250" key="3">
    <source>
        <dbReference type="UniProtKB" id="P0DXO5"/>
    </source>
</evidence>
<evidence type="ECO:0000269" key="4">
    <source>
    </source>
</evidence>
<evidence type="ECO:0000305" key="5"/>
<evidence type="ECO:0000305" key="6">
    <source>
    </source>
</evidence>
<dbReference type="EMBL" id="DQ208311">
    <property type="status" value="NOT_ANNOTATED_CDS"/>
    <property type="molecule type" value="mRNA"/>
</dbReference>
<dbReference type="SMR" id="P0CK68"/>
<dbReference type="Proteomes" id="UP000008430">
    <property type="component" value="Genome"/>
</dbReference>
<dbReference type="GO" id="GO:0003723">
    <property type="term" value="F:RNA binding"/>
    <property type="evidence" value="ECO:0007669"/>
    <property type="project" value="InterPro"/>
</dbReference>
<dbReference type="GO" id="GO:0039694">
    <property type="term" value="P:viral RNA genome replication"/>
    <property type="evidence" value="ECO:0007669"/>
    <property type="project" value="InterPro"/>
</dbReference>
<dbReference type="GO" id="GO:0075523">
    <property type="term" value="P:viral translational frameshifting"/>
    <property type="evidence" value="ECO:0007669"/>
    <property type="project" value="UniProtKB-KW"/>
</dbReference>
<dbReference type="FunFam" id="3.40.91.90:FF:000001">
    <property type="entry name" value="Polymerase acidic protein"/>
    <property type="match status" value="1"/>
</dbReference>
<dbReference type="Gene3D" id="3.40.91.90">
    <property type="entry name" value="Influenza RNA-dependent RNA polymerase subunit PA, endonuclease domain"/>
    <property type="match status" value="1"/>
</dbReference>
<dbReference type="InterPro" id="IPR001009">
    <property type="entry name" value="PA/PA-X"/>
</dbReference>
<dbReference type="InterPro" id="IPR038372">
    <property type="entry name" value="PA/PA-X_sf"/>
</dbReference>
<dbReference type="Pfam" id="PF00603">
    <property type="entry name" value="Flu_PA"/>
    <property type="match status" value="1"/>
</dbReference>
<sequence length="252" mass="29378">MEDFVRQCFNPMIVELAEKAMKEYGEDLKIETNKFAAICTHLEVCFMYSDFHFINERGESIIVESGDPNALLKHRFEIIEGRDRTMAWTVVNSICNTTGAEKPKFLPDLYDYKENRFIEIGVTRREVHIYYLEKANKIKSEKTHIHIFSFTGEEMATKADYTLDEESRARIKTRLFTIRQEMASRGLWDSFVSPREAKRQLKKDLKSQEQCAGLPTKVSHRTSPALKTLEPMWMDSNRTATLRASFLKCPKK</sequence>
<protein>
    <recommendedName>
        <fullName>Protein PA-X</fullName>
    </recommendedName>
</protein>
<proteinExistence type="evidence at protein level"/>
<feature type="chain" id="PRO_0000419351" description="Protein PA-X">
    <location>
        <begin position="1"/>
        <end position="252"/>
    </location>
</feature>
<feature type="active site" evidence="6">
    <location>
        <position position="80"/>
    </location>
</feature>
<feature type="active site" evidence="6">
    <location>
        <position position="108"/>
    </location>
</feature>
<feature type="site" description="Important for efficient shutoff activity and nuclear localization" evidence="3">
    <location>
        <position position="195"/>
    </location>
</feature>
<feature type="site" description="Important for efficient shutoff activity and nuclear localization" evidence="3">
    <location>
        <position position="198"/>
    </location>
</feature>
<feature type="site" description="Important for efficient shutoff activity and nuclear localization" evidence="3">
    <location>
        <position position="199"/>
    </location>
</feature>
<feature type="site" description="Important for efficient shutoff activity" evidence="2">
    <location>
        <position position="202"/>
    </location>
</feature>
<feature type="site" description="Important for efficient shutoff activity" evidence="2">
    <location>
        <position position="203"/>
    </location>
</feature>
<feature type="site" description="Important for efficient shutoff activity" evidence="2">
    <location>
        <position position="206"/>
    </location>
</feature>
<feature type="mutagenesis site" description="Complete loss of shutoff activity." evidence="4">
    <original>E</original>
    <variation>A</variation>
    <location>
        <position position="80"/>
    </location>
</feature>
<feature type="mutagenesis site" description="Complete loss of shutoff activity." evidence="4">
    <original>D</original>
    <variation>A</variation>
    <location>
        <position position="108"/>
    </location>
</feature>
<comment type="function">
    <text evidence="1 3 4">Plays a major role in the shutoff of the host protein expression by cleaving mRNAs probably via an endonuclease activity (PubMed:22745253). This host shutoff allows the virus to escape from the host antiviral response (By similarity). Hijacks host RNA splicing machinery to selectively target host RNAs containing introns for destruction (By similarity). This may explain the preferential degradation of RNAs that have undergone co- or post-transcriptional processing (By similarity).</text>
</comment>
<comment type="alternative products">
    <event type="ribosomal frameshifting"/>
    <isoform>
        <id>P0CK68-1</id>
        <name evidence="4">PA-X</name>
        <sequence type="displayed"/>
    </isoform>
    <isoform>
        <id>Q3HM39-1</id>
        <name>PA</name>
        <sequence type="external"/>
    </isoform>
</comment>
<comment type="domain">
    <text evidence="1 3">The probable endonuclease active site in the N-terminus and the basic amino acid cluster in the C-terminus are important for the shutoff activity. The C-terminus acts as a nuclear localization signal (By similarity). The C-terminus is recruited to host protein complexes involved in nuclear Pol II RNA processing (By similarity).</text>
</comment>
<comment type="similarity">
    <text evidence="5">Belongs to the influenza viruses PA-X family.</text>
</comment>
<reference key="1">
    <citation type="journal article" date="2005" name="Nature">
        <title>Characterization of the 1918 influenza virus polymerase genes.</title>
        <authorList>
            <person name="Taubenberger J.K."/>
            <person name="Reid A.H."/>
            <person name="Lourens R.M."/>
            <person name="Wang R."/>
            <person name="Jin G."/>
            <person name="Fanning T.G."/>
        </authorList>
    </citation>
    <scope>NUCLEOTIDE SEQUENCE [MRNA]</scope>
</reference>
<reference key="2">
    <citation type="journal article" date="2012" name="Science">
        <title>An overlapping protein-coding region in influenza A virus segment 3 modulates the host response.</title>
        <authorList>
            <person name="Jagger B.W."/>
            <person name="Wise H.M."/>
            <person name="Kash J.C."/>
            <person name="Walters K.A."/>
            <person name="Wills N.M."/>
            <person name="Xiao Y.L."/>
            <person name="Dunfee R.L."/>
            <person name="Schwartzman L.M."/>
            <person name="Ozinsky A."/>
            <person name="Bell G.L."/>
            <person name="Dalton R.M."/>
            <person name="Lo A."/>
            <person name="Efstathiou S."/>
            <person name="Atkins J.F."/>
            <person name="Firth A.E."/>
            <person name="Taubenberger J.K."/>
            <person name="Digard P."/>
        </authorList>
    </citation>
    <scope>FUNCTION</scope>
    <scope>RIBOSOMAL FRAMESHIFT</scope>
    <scope>MUTAGENESIS OF GLU-80 AND ASP-108</scope>
</reference>
<organism>
    <name type="scientific">Influenza A virus (strain A/Brevig Mission/1/1918 H1N1)</name>
    <name type="common">Influenza A virus (strain A/South Carolina/1/1918 H1N1)</name>
    <dbReference type="NCBI Taxonomy" id="88776"/>
    <lineage>
        <taxon>Viruses</taxon>
        <taxon>Riboviria</taxon>
        <taxon>Orthornavirae</taxon>
        <taxon>Negarnaviricota</taxon>
        <taxon>Polyploviricotina</taxon>
        <taxon>Insthoviricetes</taxon>
        <taxon>Articulavirales</taxon>
        <taxon>Orthomyxoviridae</taxon>
        <taxon>Alphainfluenzavirus</taxon>
        <taxon>Alphainfluenzavirus influenzae</taxon>
        <taxon>Influenza A virus</taxon>
    </lineage>
</organism>
<accession>P0CK68</accession>